<feature type="chain" id="PRO_0000441944" description="Reducing polyketide synthase DEP5">
    <location>
        <begin position="1"/>
        <end position="2371"/>
    </location>
</feature>
<feature type="domain" description="Ketosynthase family 3 (KS3)" evidence="3">
    <location>
        <begin position="47"/>
        <end position="477"/>
    </location>
</feature>
<feature type="domain" description="PKS/mFAS DH" evidence="4">
    <location>
        <begin position="982"/>
        <end position="1286"/>
    </location>
</feature>
<feature type="domain" description="Carrier" evidence="2">
    <location>
        <begin position="2286"/>
        <end position="2364"/>
    </location>
</feature>
<feature type="region of interest" description="Malonyl-CoA:ACP transacylase (MAT) domain" evidence="1">
    <location>
        <begin position="593"/>
        <end position="905"/>
    </location>
</feature>
<feature type="region of interest" description="Dehydratase (DH) domain" evidence="1">
    <location>
        <begin position="982"/>
        <end position="1158"/>
    </location>
</feature>
<feature type="region of interest" description="N-terminal hotdog fold" evidence="4">
    <location>
        <begin position="982"/>
        <end position="1120"/>
    </location>
</feature>
<feature type="region of interest" description="C-terminal hotdog fold" evidence="4">
    <location>
        <begin position="1132"/>
        <end position="1286"/>
    </location>
</feature>
<feature type="region of interest" description="Enoyl reductase (ER) domain" evidence="1">
    <location>
        <begin position="1656"/>
        <end position="1964"/>
    </location>
</feature>
<feature type="region of interest" description="Ketoreductase (KR) domain" evidence="1">
    <location>
        <begin position="1988"/>
        <end position="2163"/>
    </location>
</feature>
<feature type="active site" description="For beta-ketoacyl synthase activity" evidence="3">
    <location>
        <position position="221"/>
    </location>
</feature>
<feature type="active site" description="For beta-ketoacyl synthase activity" evidence="3">
    <location>
        <position position="358"/>
    </location>
</feature>
<feature type="active site" description="For beta-ketoacyl synthase activity" evidence="3">
    <location>
        <position position="399"/>
    </location>
</feature>
<feature type="active site" description="For malonyltransferase activity" evidence="5">
    <location>
        <position position="685"/>
    </location>
</feature>
<feature type="active site" description="Proton acceptor; for dehydratase activity" evidence="4">
    <location>
        <position position="1014"/>
    </location>
</feature>
<feature type="active site" description="Proton donor; for dehydratase activity" evidence="4">
    <location>
        <position position="1195"/>
    </location>
</feature>
<feature type="modified residue" description="O-(pantetheine 4'-phosphoryl)serine" evidence="2">
    <location>
        <position position="2323"/>
    </location>
</feature>
<dbReference type="EC" id="2.3.1.-" evidence="9"/>
<dbReference type="EMBL" id="JXCE01000338">
    <property type="protein sequence ID" value="KPA37941.1"/>
    <property type="molecule type" value="Genomic_DNA"/>
</dbReference>
<dbReference type="SMR" id="A0A0N0DCA3"/>
<dbReference type="OrthoDB" id="329835at2759"/>
<dbReference type="Proteomes" id="UP000037904">
    <property type="component" value="Unassembled WGS sequence"/>
</dbReference>
<dbReference type="GO" id="GO:0004315">
    <property type="term" value="F:3-oxoacyl-[acyl-carrier-protein] synthase activity"/>
    <property type="evidence" value="ECO:0007669"/>
    <property type="project" value="InterPro"/>
</dbReference>
<dbReference type="GO" id="GO:0004312">
    <property type="term" value="F:fatty acid synthase activity"/>
    <property type="evidence" value="ECO:0007669"/>
    <property type="project" value="TreeGrafter"/>
</dbReference>
<dbReference type="GO" id="GO:0016491">
    <property type="term" value="F:oxidoreductase activity"/>
    <property type="evidence" value="ECO:0007669"/>
    <property type="project" value="UniProtKB-KW"/>
</dbReference>
<dbReference type="GO" id="GO:0006633">
    <property type="term" value="P:fatty acid biosynthetic process"/>
    <property type="evidence" value="ECO:0007669"/>
    <property type="project" value="InterPro"/>
</dbReference>
<dbReference type="GO" id="GO:0030639">
    <property type="term" value="P:polyketide biosynthetic process"/>
    <property type="evidence" value="ECO:0007669"/>
    <property type="project" value="UniProtKB-ARBA"/>
</dbReference>
<dbReference type="CDD" id="cd05195">
    <property type="entry name" value="enoyl_red"/>
    <property type="match status" value="1"/>
</dbReference>
<dbReference type="CDD" id="cd00833">
    <property type="entry name" value="PKS"/>
    <property type="match status" value="1"/>
</dbReference>
<dbReference type="Gene3D" id="3.40.47.10">
    <property type="match status" value="1"/>
</dbReference>
<dbReference type="Gene3D" id="1.10.1200.10">
    <property type="entry name" value="ACP-like"/>
    <property type="match status" value="1"/>
</dbReference>
<dbReference type="Gene3D" id="3.40.366.10">
    <property type="entry name" value="Malonyl-Coenzyme A Acyl Carrier Protein, domain 2"/>
    <property type="match status" value="1"/>
</dbReference>
<dbReference type="Gene3D" id="3.90.180.10">
    <property type="entry name" value="Medium-chain alcohol dehydrogenases, catalytic domain"/>
    <property type="match status" value="1"/>
</dbReference>
<dbReference type="Gene3D" id="3.40.50.720">
    <property type="entry name" value="NAD(P)-binding Rossmann-like Domain"/>
    <property type="match status" value="1"/>
</dbReference>
<dbReference type="Gene3D" id="3.10.129.110">
    <property type="entry name" value="Polyketide synthase dehydratase"/>
    <property type="match status" value="1"/>
</dbReference>
<dbReference type="InterPro" id="IPR001227">
    <property type="entry name" value="Ac_transferase_dom_sf"/>
</dbReference>
<dbReference type="InterPro" id="IPR036736">
    <property type="entry name" value="ACP-like_sf"/>
</dbReference>
<dbReference type="InterPro" id="IPR014043">
    <property type="entry name" value="Acyl_transferase_dom"/>
</dbReference>
<dbReference type="InterPro" id="IPR016035">
    <property type="entry name" value="Acyl_Trfase/lysoPLipase"/>
</dbReference>
<dbReference type="InterPro" id="IPR011032">
    <property type="entry name" value="GroES-like_sf"/>
</dbReference>
<dbReference type="InterPro" id="IPR018201">
    <property type="entry name" value="Ketoacyl_synth_AS"/>
</dbReference>
<dbReference type="InterPro" id="IPR014031">
    <property type="entry name" value="Ketoacyl_synth_C"/>
</dbReference>
<dbReference type="InterPro" id="IPR014030">
    <property type="entry name" value="Ketoacyl_synth_N"/>
</dbReference>
<dbReference type="InterPro" id="IPR016036">
    <property type="entry name" value="Malonyl_transacylase_ACP-bd"/>
</dbReference>
<dbReference type="InterPro" id="IPR036291">
    <property type="entry name" value="NAD(P)-bd_dom_sf"/>
</dbReference>
<dbReference type="InterPro" id="IPR056501">
    <property type="entry name" value="NAD-bd_HRPKS_sdrA"/>
</dbReference>
<dbReference type="InterPro" id="IPR032821">
    <property type="entry name" value="PKS_assoc"/>
</dbReference>
<dbReference type="InterPro" id="IPR020841">
    <property type="entry name" value="PKS_Beta-ketoAc_synthase_dom"/>
</dbReference>
<dbReference type="InterPro" id="IPR042104">
    <property type="entry name" value="PKS_dehydratase_sf"/>
</dbReference>
<dbReference type="InterPro" id="IPR020807">
    <property type="entry name" value="PKS_DH"/>
</dbReference>
<dbReference type="InterPro" id="IPR049551">
    <property type="entry name" value="PKS_DH_C"/>
</dbReference>
<dbReference type="InterPro" id="IPR049552">
    <property type="entry name" value="PKS_DH_N"/>
</dbReference>
<dbReference type="InterPro" id="IPR020843">
    <property type="entry name" value="PKS_ER"/>
</dbReference>
<dbReference type="InterPro" id="IPR013968">
    <property type="entry name" value="PKS_KR"/>
</dbReference>
<dbReference type="InterPro" id="IPR049900">
    <property type="entry name" value="PKS_mFAS_DH"/>
</dbReference>
<dbReference type="InterPro" id="IPR050091">
    <property type="entry name" value="PKS_NRPS_Biosynth_Enz"/>
</dbReference>
<dbReference type="InterPro" id="IPR009081">
    <property type="entry name" value="PP-bd_ACP"/>
</dbReference>
<dbReference type="InterPro" id="IPR006162">
    <property type="entry name" value="Ppantetheine_attach_site"/>
</dbReference>
<dbReference type="InterPro" id="IPR016039">
    <property type="entry name" value="Thiolase-like"/>
</dbReference>
<dbReference type="PANTHER" id="PTHR43775">
    <property type="entry name" value="FATTY ACID SYNTHASE"/>
    <property type="match status" value="1"/>
</dbReference>
<dbReference type="PANTHER" id="PTHR43775:SF50">
    <property type="entry name" value="HIGHLY REDUCING POLYKETIDE SYNTHASE SRDA"/>
    <property type="match status" value="1"/>
</dbReference>
<dbReference type="Pfam" id="PF23297">
    <property type="entry name" value="ACP_SdgA_C"/>
    <property type="match status" value="1"/>
</dbReference>
<dbReference type="Pfam" id="PF00698">
    <property type="entry name" value="Acyl_transf_1"/>
    <property type="match status" value="1"/>
</dbReference>
<dbReference type="Pfam" id="PF16197">
    <property type="entry name" value="KAsynt_C_assoc"/>
    <property type="match status" value="1"/>
</dbReference>
<dbReference type="Pfam" id="PF00109">
    <property type="entry name" value="ketoacyl-synt"/>
    <property type="match status" value="1"/>
</dbReference>
<dbReference type="Pfam" id="PF02801">
    <property type="entry name" value="Ketoacyl-synt_C"/>
    <property type="match status" value="1"/>
</dbReference>
<dbReference type="Pfam" id="PF08659">
    <property type="entry name" value="KR"/>
    <property type="match status" value="1"/>
</dbReference>
<dbReference type="Pfam" id="PF23114">
    <property type="entry name" value="NAD-bd_HRPKS_sdrA"/>
    <property type="match status" value="1"/>
</dbReference>
<dbReference type="Pfam" id="PF21089">
    <property type="entry name" value="PKS_DH_N"/>
    <property type="match status" value="1"/>
</dbReference>
<dbReference type="Pfam" id="PF14765">
    <property type="entry name" value="PS-DH"/>
    <property type="match status" value="1"/>
</dbReference>
<dbReference type="SMART" id="SM00827">
    <property type="entry name" value="PKS_AT"/>
    <property type="match status" value="1"/>
</dbReference>
<dbReference type="SMART" id="SM00826">
    <property type="entry name" value="PKS_DH"/>
    <property type="match status" value="1"/>
</dbReference>
<dbReference type="SMART" id="SM00829">
    <property type="entry name" value="PKS_ER"/>
    <property type="match status" value="1"/>
</dbReference>
<dbReference type="SMART" id="SM00822">
    <property type="entry name" value="PKS_KR"/>
    <property type="match status" value="1"/>
</dbReference>
<dbReference type="SMART" id="SM00825">
    <property type="entry name" value="PKS_KS"/>
    <property type="match status" value="1"/>
</dbReference>
<dbReference type="SUPFAM" id="SSF47336">
    <property type="entry name" value="ACP-like"/>
    <property type="match status" value="1"/>
</dbReference>
<dbReference type="SUPFAM" id="SSF52151">
    <property type="entry name" value="FabD/lysophospholipase-like"/>
    <property type="match status" value="1"/>
</dbReference>
<dbReference type="SUPFAM" id="SSF50129">
    <property type="entry name" value="GroES-like"/>
    <property type="match status" value="1"/>
</dbReference>
<dbReference type="SUPFAM" id="SSF51735">
    <property type="entry name" value="NAD(P)-binding Rossmann-fold domains"/>
    <property type="match status" value="2"/>
</dbReference>
<dbReference type="SUPFAM" id="SSF55048">
    <property type="entry name" value="Probable ACP-binding domain of malonyl-CoA ACP transacylase"/>
    <property type="match status" value="1"/>
</dbReference>
<dbReference type="SUPFAM" id="SSF53901">
    <property type="entry name" value="Thiolase-like"/>
    <property type="match status" value="1"/>
</dbReference>
<dbReference type="PROSITE" id="PS50075">
    <property type="entry name" value="CARRIER"/>
    <property type="match status" value="1"/>
</dbReference>
<dbReference type="PROSITE" id="PS00606">
    <property type="entry name" value="KS3_1"/>
    <property type="match status" value="1"/>
</dbReference>
<dbReference type="PROSITE" id="PS52004">
    <property type="entry name" value="KS3_2"/>
    <property type="match status" value="1"/>
</dbReference>
<dbReference type="PROSITE" id="PS00012">
    <property type="entry name" value="PHOSPHOPANTETHEINE"/>
    <property type="match status" value="1"/>
</dbReference>
<dbReference type="PROSITE" id="PS52019">
    <property type="entry name" value="PKS_MFAS_DH"/>
    <property type="match status" value="1"/>
</dbReference>
<protein>
    <recommendedName>
        <fullName evidence="8">Reducing polyketide synthase DEP5</fullName>
        <ecNumber evidence="9">2.3.1.-</ecNumber>
    </recommendedName>
    <alternativeName>
        <fullName evidence="8">Depudecin biosynthesis cluster protein 1</fullName>
    </alternativeName>
</protein>
<name>DEP5_FUSLA</name>
<evidence type="ECO:0000255" key="1"/>
<evidence type="ECO:0000255" key="2">
    <source>
        <dbReference type="PROSITE-ProRule" id="PRU00258"/>
    </source>
</evidence>
<evidence type="ECO:0000255" key="3">
    <source>
        <dbReference type="PROSITE-ProRule" id="PRU01348"/>
    </source>
</evidence>
<evidence type="ECO:0000255" key="4">
    <source>
        <dbReference type="PROSITE-ProRule" id="PRU01363"/>
    </source>
</evidence>
<evidence type="ECO:0000255" key="5">
    <source>
        <dbReference type="PROSITE-ProRule" id="PRU10022"/>
    </source>
</evidence>
<evidence type="ECO:0000269" key="6">
    <source>
    </source>
</evidence>
<evidence type="ECO:0000269" key="7">
    <source>
    </source>
</evidence>
<evidence type="ECO:0000303" key="8">
    <source>
    </source>
</evidence>
<evidence type="ECO:0000305" key="9">
    <source>
    </source>
</evidence>
<evidence type="ECO:0000305" key="10">
    <source>
    </source>
</evidence>
<gene>
    <name evidence="8" type="primary">DEP5</name>
    <name type="ORF">FLAG1_09232</name>
</gene>
<reference key="1">
    <citation type="submission" date="2015-04" db="EMBL/GenBank/DDBJ databases">
        <title>The draft genome sequence of Fusarium langsethiae, a T-2/HT-2 mycotoxin producer.</title>
        <authorList>
            <person name="Lysoe E."/>
            <person name="Divon H.H."/>
            <person name="Terzi V."/>
            <person name="Orru L."/>
            <person name="Lamontanara A."/>
            <person name="Kolseth A.-K."/>
            <person name="Frandsen R.J."/>
            <person name="Nielsen K."/>
            <person name="Thrane U."/>
        </authorList>
    </citation>
    <scope>NUCLEOTIDE SEQUENCE [LARGE SCALE GENOMIC DNA]</scope>
    <source>
        <strain>Fl201059</strain>
    </source>
</reference>
<reference key="2">
    <citation type="journal article" date="2009" name="Mol. Plant Microbe Interact.">
        <title>Biosynthesis and role in virulence of the histone deacetylase inhibitor depudecin from Alternaria brassicicola.</title>
        <authorList>
            <person name="Wight W.D."/>
            <person name="Kim K.-H."/>
            <person name="Lawrence C.B."/>
            <person name="Walton J.D."/>
        </authorList>
    </citation>
    <scope>FUNCTION</scope>
</reference>
<reference key="3">
    <citation type="journal article" date="2017" name="Mol. Biol. Evol.">
        <title>Differential retention of gene functions in a secondary metabolite cluster.</title>
        <authorList>
            <person name="Reynolds H."/>
            <person name="Slot J.C."/>
            <person name="Divon H.H."/>
            <person name="Lysoee E."/>
            <person name="Proctor R.H."/>
            <person name="Brown D.W."/>
        </authorList>
    </citation>
    <scope>FUNCTION</scope>
    <scope>INDUCTION</scope>
    <scope>PATHWAY</scope>
</reference>
<proteinExistence type="evidence at transcript level"/>
<comment type="function">
    <text evidence="6 7">Part of the gene cluster that mediates the biosynthesis of depudecin, a highly oxidized eleven-carbon linear polyketide that acts as a histone deacetylase (HDAC) inhibitor and makes a small contribution to pathogenesis (PubMed:19737099, PubMed:28460114). The reducing polyketide synthase DEP5 is the central enzyme in depudecin biosynthesis by yielding the backbone polyketide chain (PubMed:19737099). The monooxygenases DEP2 and DEP4, as well as the uncharacterized protein DEP1, then act as tailoring enzymes to modify the intermediate polyketide chain into depudecin (PubMed:19737099).</text>
</comment>
<comment type="pathway">
    <text evidence="10">Polyketide biosynthesis.</text>
</comment>
<comment type="induction">
    <text evidence="7">Expression correlates with the production of depudecin with high levels on oat grain medium, and minimal levels on oat flower medium and complete medium (PubMed:28460114).</text>
</comment>
<keyword id="KW-0012">Acyltransferase</keyword>
<keyword id="KW-0511">Multifunctional enzyme</keyword>
<keyword id="KW-0521">NADP</keyword>
<keyword id="KW-0560">Oxidoreductase</keyword>
<keyword id="KW-0596">Phosphopantetheine</keyword>
<keyword id="KW-0597">Phosphoprotein</keyword>
<keyword id="KW-1185">Reference proteome</keyword>
<keyword id="KW-0808">Transferase</keyword>
<accession>A0A0N0DCA3</accession>
<sequence>MPHFRESSSSSENGAIDHDLQHTFQRILSDDQYTKFSPNEPPLSQQLEPIAVVGMGCRLPGDVSSPSDFWKLMMEKKSGQTPKVPSSRFNIDAHFHPDNDRPGSFGVLGGYFINETLKEFDPAFFGITPVEATWMDPQQRKLLEVVYEAFESAGLTLDQLSGSDTACFMATFTADFQQMSFKEPSFRHSLAATGVDPGLLSNRVSHVFNLRGPSIVVNTACSSSVYALHNACNALRTHECSAAVVGGSNLILTVDQHMNTAKLGVMSPTSTCHTFNSYANGYGRAEGVGAIYLKRLSDAVRDGDPIRGVIRSSATNNNGKAPGVGITYPGFDGQRTVMRHAYQRSGLDPMLTGYFECHGTGTAIGDPLEVHAVSDIMNAARKDADGPLNIGAVKTNIGHSEAASGLSAVIKSILMVERGIIPPTHGVTDLNPKIDWKGWKVHVPTDPIPMPKHLPVTRVSVNSFGYGGTNAHTIIESPKSLLSAPQNYKYSMSGPTIKAKQPRGATRRNRPHLLVFSAHDTGTLKRNAAALGKVAPNYNLLDLSFTLANHRTRFQSRGMVVTTPATLQKTFTDGMPDFMVASKNVTARNLGFVFTGQGAQWAGMGQQLMTYYPTFLKAIRRMDLVLEDLDDAPSWTLEESLLENPETSRVGEAEFSQPLCTAVQVALVQLLRTWGIRPSVTLGHSSGEIAAAYAAGYLSEADAILAAYYRGQVVKSIDTSGAMMAVGLGAEAVKSYLEPFQAEVVVACHNSPVGVTLSGNIDALKAIEETLKVDGVFARLVKTNSKAYHSHHMLPAVDKYETLLRDNSQKGISGVSLNKVKMVSTVTNSVLSEDAVLDGKYWSANLVSPVLFNQAIQSALTNKDMHIDTLIEIGPHSALSGPIRQIKAELGADKVQYLPTLIRGSPCAGQVLKLAGEFFLRDYPINLSQVSMLEETSPSGKILSRSGNLIVDLPPYQWDKTKKFWAESRESKEHRSPRFPRHDVLGQLTIGGSLTEPTWRNVLRLKDLPWLRDHSLGGEAVFPAAGYLAMAMEATTQLNEMSGSPREIKSYVFRDVRIQQALVTPDDDDGIEVLFNMCPSRLATDNTATQSWDFNASSVSPEGHLKNHMAGSIRINTSNKQRAVARPVPNLPQRASGKLWNQALKKVGFNYGPTFQDMDNITFDGTSYCAQSMTNLKSTVMDNESRYVLHPAILDSCLQLMIVAIWAGRAGAMKFGAVPVNAEEIVIWRPTATQLDNSSAAKAFSWIDPRGQRLFNAHNQLLAGDGEVLMEIKSMRCTAYEAAIPQTLETNVQPEPYSQMVSKPDVSFLNGDQRDLDLADFIALAHFKNPALRVLATDASTASLLLSRIPALGLTVATGSSGVSDMEAQFAGFDNASVLSLDLNDSLARQSHEKLTRSFNLVISPGASMATLRTVSELLLEGGQAVLQQDPTFSDQGLKDAGFSGLECFLGQSMFVTSSIQTRKPVLSTVQLLYHTNPTSHMSPLELQLRDAGIKTERLKLGDSCTPGANIIALADLERPLIASMSEFDFLQIQKTLSEASKILWVSCGGSLEGSPEYAMTRGLLRSLRSERAALKATLVDFVPDDLDTNEFSLRTTSLAATLFEGDQELETEYLARDGQLLITRLVPFDIVNQRHGHNGDETQPHPFDAETNLVGKVEAGKVVFEHSRSDPEPLQETEVEFRPLATGLTAEGRAIISGASFETDFSHEASGIVTRVGDAVNKVSIGDRVVAFSSNTFSNFQRVQECLVQRLQDDEDSATMASLPLYYGAALYGLETLARLRPGESVLILPGLGLLGAAAIKVAQALGGHPSVAVRDSAEAEEVEVAFGVPRSQILVAYSPDRLMRCHEIDVVFSGSTTEPLLAEESWRNLPALSRFVSCSNSSASAAPSFASTAISRGASYLSVNITGLFKKPHILGGLLERIIELFRSGLIPAPLLNVQNIAEINHIGSPSSQSLSSTETVLVHEKGTGTVDVVQSRPRLELRSDATYLLVGCLGGLGRSLTTWMMKRGACHFAFLSRSGTDSEQARICVQELEARGANVQVFRGDAAVKEDVEMAVASISAHCPLRGVVNAAMVLRDGLFQNMSYDNWTTSIRPKVLGSKNLHEAIASLDLDFFLMTSSVSGILGTPTQANYAAANSYMDALACLRRRQGKHACAVVLPMILGVGVVAQDLDLEVSLKRKGMYGIDEEALLSAFEAAIFEQQHSQDSQSNFDHLVVGLEATKLYNARQEAEGDVDAFWTTDPRFSVLLDDMKQHSGDNQGDGEKGSILSQVKAASDSPAQAISLVRDHFISKLARVLLLDQDEFDDDGSGRSIASYGIDSMIGAELRNWIFKELGLDVAFQQLLSPSLTISKFAELVCAAQGIVLDNE</sequence>
<organism>
    <name type="scientific">Fusarium langsethiae</name>
    <dbReference type="NCBI Taxonomy" id="179993"/>
    <lineage>
        <taxon>Eukaryota</taxon>
        <taxon>Fungi</taxon>
        <taxon>Dikarya</taxon>
        <taxon>Ascomycota</taxon>
        <taxon>Pezizomycotina</taxon>
        <taxon>Sordariomycetes</taxon>
        <taxon>Hypocreomycetidae</taxon>
        <taxon>Hypocreales</taxon>
        <taxon>Nectriaceae</taxon>
        <taxon>Fusarium</taxon>
    </lineage>
</organism>